<sequence length="201" mass="22113">MEKFTTLEGVAAPMRIINIDTDRIIPKQYLKTIKRTGLGQGLFSEMRYNDDGSENPDFVLNQPAYRHAKTLVVGDNFGCGSSREHAPWALADFGIRCVISTSFADIFFNNCAKNGILAIVVSPEDLEKLFQDAERGANATLTIDLAAQTIKGPDGGTLHFDIDEGRKHNLLNGLDEIGLTLDQKAPAIDAYEAKLAQREWA</sequence>
<evidence type="ECO:0000255" key="1">
    <source>
        <dbReference type="HAMAP-Rule" id="MF_01031"/>
    </source>
</evidence>
<organism>
    <name type="scientific">Methylorubrum extorquens (strain CM4 / NCIMB 13688)</name>
    <name type="common">Methylobacterium extorquens</name>
    <dbReference type="NCBI Taxonomy" id="440085"/>
    <lineage>
        <taxon>Bacteria</taxon>
        <taxon>Pseudomonadati</taxon>
        <taxon>Pseudomonadota</taxon>
        <taxon>Alphaproteobacteria</taxon>
        <taxon>Hyphomicrobiales</taxon>
        <taxon>Methylobacteriaceae</taxon>
        <taxon>Methylorubrum</taxon>
    </lineage>
</organism>
<reference key="1">
    <citation type="submission" date="2008-12" db="EMBL/GenBank/DDBJ databases">
        <title>Complete sequence of chromosome of Methylobacterium chloromethanicum CM4.</title>
        <authorList>
            <consortium name="US DOE Joint Genome Institute"/>
            <person name="Lucas S."/>
            <person name="Copeland A."/>
            <person name="Lapidus A."/>
            <person name="Glavina del Rio T."/>
            <person name="Dalin E."/>
            <person name="Tice H."/>
            <person name="Bruce D."/>
            <person name="Goodwin L."/>
            <person name="Pitluck S."/>
            <person name="Chertkov O."/>
            <person name="Brettin T."/>
            <person name="Detter J.C."/>
            <person name="Han C."/>
            <person name="Larimer F."/>
            <person name="Land M."/>
            <person name="Hauser L."/>
            <person name="Kyrpides N."/>
            <person name="Mikhailova N."/>
            <person name="Marx C."/>
            <person name="Richardson P."/>
        </authorList>
    </citation>
    <scope>NUCLEOTIDE SEQUENCE [LARGE SCALE GENOMIC DNA]</scope>
    <source>
        <strain>CM4 / NCIMB 13688</strain>
    </source>
</reference>
<gene>
    <name evidence="1" type="primary">leuD</name>
    <name type="ordered locus">Mchl_0340</name>
</gene>
<comment type="function">
    <text evidence="1">Catalyzes the isomerization between 2-isopropylmalate and 3-isopropylmalate, via the formation of 2-isopropylmaleate.</text>
</comment>
<comment type="catalytic activity">
    <reaction evidence="1">
        <text>(2R,3S)-3-isopropylmalate = (2S)-2-isopropylmalate</text>
        <dbReference type="Rhea" id="RHEA:32287"/>
        <dbReference type="ChEBI" id="CHEBI:1178"/>
        <dbReference type="ChEBI" id="CHEBI:35121"/>
        <dbReference type="EC" id="4.2.1.33"/>
    </reaction>
</comment>
<comment type="pathway">
    <text evidence="1">Amino-acid biosynthesis; L-leucine biosynthesis; L-leucine from 3-methyl-2-oxobutanoate: step 2/4.</text>
</comment>
<comment type="subunit">
    <text evidence="1">Heterodimer of LeuC and LeuD.</text>
</comment>
<comment type="similarity">
    <text evidence="1">Belongs to the LeuD family. LeuD type 1 subfamily.</text>
</comment>
<proteinExistence type="inferred from homology"/>
<feature type="chain" id="PRO_1000149418" description="3-isopropylmalate dehydratase small subunit">
    <location>
        <begin position="1"/>
        <end position="201"/>
    </location>
</feature>
<keyword id="KW-0028">Amino-acid biosynthesis</keyword>
<keyword id="KW-0100">Branched-chain amino acid biosynthesis</keyword>
<keyword id="KW-0432">Leucine biosynthesis</keyword>
<keyword id="KW-0456">Lyase</keyword>
<protein>
    <recommendedName>
        <fullName evidence="1">3-isopropylmalate dehydratase small subunit</fullName>
        <ecNumber evidence="1">4.2.1.33</ecNumber>
    </recommendedName>
    <alternativeName>
        <fullName evidence="1">Alpha-IPM isomerase</fullName>
        <shortName evidence="1">IPMI</shortName>
    </alternativeName>
    <alternativeName>
        <fullName evidence="1">Isopropylmalate isomerase</fullName>
    </alternativeName>
</protein>
<name>LEUD_METC4</name>
<accession>B7KZ04</accession>
<dbReference type="EC" id="4.2.1.33" evidence="1"/>
<dbReference type="EMBL" id="CP001298">
    <property type="protein sequence ID" value="ACK81277.1"/>
    <property type="molecule type" value="Genomic_DNA"/>
</dbReference>
<dbReference type="RefSeq" id="WP_012252105.1">
    <property type="nucleotide sequence ID" value="NC_011757.1"/>
</dbReference>
<dbReference type="SMR" id="B7KZ04"/>
<dbReference type="GeneID" id="72987551"/>
<dbReference type="KEGG" id="mch:Mchl_0340"/>
<dbReference type="HOGENOM" id="CLU_081378_0_3_5"/>
<dbReference type="UniPathway" id="UPA00048">
    <property type="reaction ID" value="UER00071"/>
</dbReference>
<dbReference type="Proteomes" id="UP000002385">
    <property type="component" value="Chromosome"/>
</dbReference>
<dbReference type="GO" id="GO:0009316">
    <property type="term" value="C:3-isopropylmalate dehydratase complex"/>
    <property type="evidence" value="ECO:0007669"/>
    <property type="project" value="InterPro"/>
</dbReference>
<dbReference type="GO" id="GO:0003861">
    <property type="term" value="F:3-isopropylmalate dehydratase activity"/>
    <property type="evidence" value="ECO:0007669"/>
    <property type="project" value="UniProtKB-UniRule"/>
</dbReference>
<dbReference type="GO" id="GO:0009098">
    <property type="term" value="P:L-leucine biosynthetic process"/>
    <property type="evidence" value="ECO:0007669"/>
    <property type="project" value="UniProtKB-UniRule"/>
</dbReference>
<dbReference type="CDD" id="cd01577">
    <property type="entry name" value="IPMI_Swivel"/>
    <property type="match status" value="1"/>
</dbReference>
<dbReference type="FunFam" id="3.20.19.10:FF:000003">
    <property type="entry name" value="3-isopropylmalate dehydratase small subunit"/>
    <property type="match status" value="1"/>
</dbReference>
<dbReference type="Gene3D" id="3.20.19.10">
    <property type="entry name" value="Aconitase, domain 4"/>
    <property type="match status" value="1"/>
</dbReference>
<dbReference type="HAMAP" id="MF_01031">
    <property type="entry name" value="LeuD_type1"/>
    <property type="match status" value="1"/>
</dbReference>
<dbReference type="InterPro" id="IPR004431">
    <property type="entry name" value="3-IsopropMal_deHydase_ssu"/>
</dbReference>
<dbReference type="InterPro" id="IPR015928">
    <property type="entry name" value="Aconitase/3IPM_dehydase_swvl"/>
</dbReference>
<dbReference type="InterPro" id="IPR000573">
    <property type="entry name" value="AconitaseA/IPMdHydase_ssu_swvl"/>
</dbReference>
<dbReference type="InterPro" id="IPR033940">
    <property type="entry name" value="IPMI_Swivel"/>
</dbReference>
<dbReference type="InterPro" id="IPR050075">
    <property type="entry name" value="LeuD"/>
</dbReference>
<dbReference type="NCBIfam" id="TIGR00171">
    <property type="entry name" value="leuD"/>
    <property type="match status" value="1"/>
</dbReference>
<dbReference type="NCBIfam" id="NF002458">
    <property type="entry name" value="PRK01641.1"/>
    <property type="match status" value="1"/>
</dbReference>
<dbReference type="PANTHER" id="PTHR43345:SF5">
    <property type="entry name" value="3-ISOPROPYLMALATE DEHYDRATASE SMALL SUBUNIT"/>
    <property type="match status" value="1"/>
</dbReference>
<dbReference type="PANTHER" id="PTHR43345">
    <property type="entry name" value="3-ISOPROPYLMALATE DEHYDRATASE SMALL SUBUNIT 2-RELATED-RELATED"/>
    <property type="match status" value="1"/>
</dbReference>
<dbReference type="Pfam" id="PF00694">
    <property type="entry name" value="Aconitase_C"/>
    <property type="match status" value="1"/>
</dbReference>
<dbReference type="SUPFAM" id="SSF52016">
    <property type="entry name" value="LeuD/IlvD-like"/>
    <property type="match status" value="1"/>
</dbReference>